<name>YDCD_ECOLI</name>
<organism>
    <name type="scientific">Escherichia coli (strain K12)</name>
    <dbReference type="NCBI Taxonomy" id="83333"/>
    <lineage>
        <taxon>Bacteria</taxon>
        <taxon>Pseudomonadati</taxon>
        <taxon>Pseudomonadota</taxon>
        <taxon>Gammaproteobacteria</taxon>
        <taxon>Enterobacterales</taxon>
        <taxon>Enterobacteriaceae</taxon>
        <taxon>Escherichia</taxon>
    </lineage>
</organism>
<protein>
    <recommendedName>
        <fullName>Uncharacterized protein YdcD</fullName>
    </recommendedName>
    <alternativeName>
        <fullName>ORF-E2</fullName>
    </alternativeName>
</protein>
<proteinExistence type="evidence at protein level"/>
<accession>P31991</accession>
<accession>P77459</accession>
<dbReference type="EMBL" id="X60998">
    <property type="protein sequence ID" value="CAA43310.1"/>
    <property type="molecule type" value="Genomic_DNA"/>
</dbReference>
<dbReference type="EMBL" id="U00096">
    <property type="protein sequence ID" value="AAC74539.1"/>
    <property type="molecule type" value="Genomic_DNA"/>
</dbReference>
<dbReference type="EMBL" id="AP009048">
    <property type="protein sequence ID" value="BAA15088.1"/>
    <property type="molecule type" value="Genomic_DNA"/>
</dbReference>
<dbReference type="PIR" id="D64898">
    <property type="entry name" value="D64898"/>
</dbReference>
<dbReference type="RefSeq" id="NP_415974.1">
    <property type="nucleotide sequence ID" value="NC_000913.3"/>
</dbReference>
<dbReference type="RefSeq" id="WP_000939263.1">
    <property type="nucleotide sequence ID" value="NZ_LN832404.1"/>
</dbReference>
<dbReference type="PDB" id="8WJ5">
    <property type="method" value="X-ray"/>
    <property type="resolution" value="2.00 A"/>
    <property type="chains" value="A=26-160"/>
</dbReference>
<dbReference type="PDBsum" id="8WJ5"/>
<dbReference type="SMR" id="P31991"/>
<dbReference type="BioGRID" id="4262887">
    <property type="interactions" value="4"/>
</dbReference>
<dbReference type="FunCoup" id="P31991">
    <property type="interactions" value="11"/>
</dbReference>
<dbReference type="IntAct" id="P31991">
    <property type="interactions" value="2"/>
</dbReference>
<dbReference type="STRING" id="511145.b1457"/>
<dbReference type="PaxDb" id="511145-b1457"/>
<dbReference type="EnsemblBacteria" id="AAC74539">
    <property type="protein sequence ID" value="AAC74539"/>
    <property type="gene ID" value="b1457"/>
</dbReference>
<dbReference type="GeneID" id="946958"/>
<dbReference type="KEGG" id="ecj:JW1452"/>
<dbReference type="KEGG" id="eco:b1457"/>
<dbReference type="KEGG" id="ecoc:C3026_08470"/>
<dbReference type="PATRIC" id="fig|511145.12.peg.1524"/>
<dbReference type="EchoBASE" id="EB1710"/>
<dbReference type="HOGENOM" id="CLU_1649546_0_0_6"/>
<dbReference type="InParanoid" id="P31991"/>
<dbReference type="BioCyc" id="EcoCyc:EG11760-MONOMER"/>
<dbReference type="PRO" id="PR:P31991"/>
<dbReference type="Proteomes" id="UP000000625">
    <property type="component" value="Chromosome"/>
</dbReference>
<keyword id="KW-0002">3D-structure</keyword>
<keyword id="KW-1185">Reference proteome</keyword>
<evidence type="ECO:0007829" key="1">
    <source>
        <dbReference type="PDB" id="8WJ5"/>
    </source>
</evidence>
<reference key="1">
    <citation type="journal article" date="1993" name="J. Bacteriol.">
        <title>Rhs elements of Escherichia coli K-12: complex composites of shared and unique components that have different evolutionary histories.</title>
        <authorList>
            <person name="Zhao S."/>
            <person name="Sandt C.H."/>
            <person name="Feulner G."/>
            <person name="Vlazny D.A."/>
            <person name="Gray J.A."/>
            <person name="Hill C.W."/>
        </authorList>
    </citation>
    <scope>NUCLEOTIDE SEQUENCE [GENOMIC DNA]</scope>
    <source>
        <strain>K12</strain>
    </source>
</reference>
<reference key="2">
    <citation type="submission" date="1996-12" db="EMBL/GenBank/DDBJ databases">
        <authorList>
            <person name="Hill C.W."/>
        </authorList>
    </citation>
    <scope>SEQUENCE REVISION TO 50 AND 147</scope>
    <source>
        <strain>K12</strain>
    </source>
</reference>
<reference key="3">
    <citation type="journal article" date="1996" name="DNA Res.">
        <title>A 570-kb DNA sequence of the Escherichia coli K-12 genome corresponding to the 28.0-40.1 min region on the linkage map.</title>
        <authorList>
            <person name="Aiba H."/>
            <person name="Baba T."/>
            <person name="Fujita K."/>
            <person name="Hayashi K."/>
            <person name="Inada T."/>
            <person name="Isono K."/>
            <person name="Itoh T."/>
            <person name="Kasai H."/>
            <person name="Kashimoto K."/>
            <person name="Kimura S."/>
            <person name="Kitakawa M."/>
            <person name="Kitagawa M."/>
            <person name="Makino K."/>
            <person name="Miki T."/>
            <person name="Mizobuchi K."/>
            <person name="Mori H."/>
            <person name="Mori T."/>
            <person name="Motomura K."/>
            <person name="Nakade S."/>
            <person name="Nakamura Y."/>
            <person name="Nashimoto H."/>
            <person name="Nishio Y."/>
            <person name="Oshima T."/>
            <person name="Saito N."/>
            <person name="Sampei G."/>
            <person name="Seki Y."/>
            <person name="Sivasundaram S."/>
            <person name="Tagami H."/>
            <person name="Takeda J."/>
            <person name="Takemoto K."/>
            <person name="Takeuchi Y."/>
            <person name="Wada C."/>
            <person name="Yamamoto Y."/>
            <person name="Horiuchi T."/>
        </authorList>
    </citation>
    <scope>NUCLEOTIDE SEQUENCE [LARGE SCALE GENOMIC DNA]</scope>
    <source>
        <strain>K12 / W3110 / ATCC 27325 / DSM 5911</strain>
    </source>
</reference>
<reference key="4">
    <citation type="journal article" date="1997" name="Science">
        <title>The complete genome sequence of Escherichia coli K-12.</title>
        <authorList>
            <person name="Blattner F.R."/>
            <person name="Plunkett G. III"/>
            <person name="Bloch C.A."/>
            <person name="Perna N.T."/>
            <person name="Burland V."/>
            <person name="Riley M."/>
            <person name="Collado-Vides J."/>
            <person name="Glasner J.D."/>
            <person name="Rode C.K."/>
            <person name="Mayhew G.F."/>
            <person name="Gregor J."/>
            <person name="Davis N.W."/>
            <person name="Kirkpatrick H.A."/>
            <person name="Goeden M.A."/>
            <person name="Rose D.J."/>
            <person name="Mau B."/>
            <person name="Shao Y."/>
        </authorList>
    </citation>
    <scope>NUCLEOTIDE SEQUENCE [LARGE SCALE GENOMIC DNA]</scope>
    <source>
        <strain>K12 / MG1655 / ATCC 47076</strain>
    </source>
</reference>
<reference key="5">
    <citation type="journal article" date="2006" name="Mol. Syst. Biol.">
        <title>Highly accurate genome sequences of Escherichia coli K-12 strains MG1655 and W3110.</title>
        <authorList>
            <person name="Hayashi K."/>
            <person name="Morooka N."/>
            <person name="Yamamoto Y."/>
            <person name="Fujita K."/>
            <person name="Isono K."/>
            <person name="Choi S."/>
            <person name="Ohtsubo E."/>
            <person name="Baba T."/>
            <person name="Wanner B.L."/>
            <person name="Mori H."/>
            <person name="Horiuchi T."/>
        </authorList>
    </citation>
    <scope>NUCLEOTIDE SEQUENCE [LARGE SCALE GENOMIC DNA]</scope>
    <source>
        <strain>K12 / W3110 / ATCC 27325 / DSM 5911</strain>
    </source>
</reference>
<sequence length="160" mass="18907">MLQIIRGKLVIFLITLCLFVVYLGFDNNSNSDIVFYGHKTPKSVEIYLSEKNIIYKIINDQKISRGNGHFISIMVNNYRTHCGVVDINLNFFNDILYSVRLKNISKLENMEFCATKQRVYFSDKNKKASYKIINYGDYYDVDYYDNNLKNEVFDWIGKWS</sequence>
<feature type="chain" id="PRO_0000168928" description="Uncharacterized protein YdcD">
    <location>
        <begin position="1"/>
        <end position="160"/>
    </location>
</feature>
<feature type="helix" evidence="1">
    <location>
        <begin position="41"/>
        <end position="50"/>
    </location>
</feature>
<feature type="strand" evidence="1">
    <location>
        <begin position="56"/>
        <end position="60"/>
    </location>
</feature>
<feature type="turn" evidence="1">
    <location>
        <begin position="61"/>
        <end position="66"/>
    </location>
</feature>
<feature type="strand" evidence="1">
    <location>
        <begin position="70"/>
        <end position="80"/>
    </location>
</feature>
<feature type="strand" evidence="1">
    <location>
        <begin position="83"/>
        <end position="92"/>
    </location>
</feature>
<feature type="strand" evidence="1">
    <location>
        <begin position="95"/>
        <end position="105"/>
    </location>
</feature>
<feature type="helix" evidence="1">
    <location>
        <begin position="110"/>
        <end position="118"/>
    </location>
</feature>
<feature type="helix" evidence="1">
    <location>
        <begin position="119"/>
        <end position="121"/>
    </location>
</feature>
<feature type="strand" evidence="1">
    <location>
        <begin position="129"/>
        <end position="134"/>
    </location>
</feature>
<feature type="strand" evidence="1">
    <location>
        <begin position="136"/>
        <end position="144"/>
    </location>
</feature>
<feature type="helix" evidence="1">
    <location>
        <begin position="146"/>
        <end position="159"/>
    </location>
</feature>
<gene>
    <name type="primary">ydcD</name>
    <name type="ordered locus">b1457</name>
    <name type="ordered locus">JW1452</name>
</gene>